<protein>
    <recommendedName>
        <fullName evidence="1">Probable cobyric acid synthase</fullName>
    </recommendedName>
</protein>
<feature type="chain" id="PRO_0000141349" description="Probable cobyric acid synthase">
    <location>
        <begin position="1"/>
        <end position="494"/>
    </location>
</feature>
<feature type="domain" description="GATase cobBQ-type" evidence="1">
    <location>
        <begin position="249"/>
        <end position="447"/>
    </location>
</feature>
<feature type="active site" description="Nucleophile" evidence="1">
    <location>
        <position position="331"/>
    </location>
</feature>
<feature type="active site" evidence="1">
    <location>
        <position position="439"/>
    </location>
</feature>
<reference key="1">
    <citation type="journal article" date="2002" name="Proc. Natl. Acad. Sci. U.S.A.">
        <title>The complete genome of hyperthermophile Methanopyrus kandleri AV19 and monophyly of archaeal methanogens.</title>
        <authorList>
            <person name="Slesarev A.I."/>
            <person name="Mezhevaya K.V."/>
            <person name="Makarova K.S."/>
            <person name="Polushin N.N."/>
            <person name="Shcherbinina O.V."/>
            <person name="Shakhova V.V."/>
            <person name="Belova G.I."/>
            <person name="Aravind L."/>
            <person name="Natale D.A."/>
            <person name="Rogozin I.B."/>
            <person name="Tatusov R.L."/>
            <person name="Wolf Y.I."/>
            <person name="Stetter K.O."/>
            <person name="Malykh A.G."/>
            <person name="Koonin E.V."/>
            <person name="Kozyavkin S.A."/>
        </authorList>
    </citation>
    <scope>NUCLEOTIDE SEQUENCE [LARGE SCALE GENOMIC DNA]</scope>
    <source>
        <strain>AV19 / DSM 6324 / JCM 9639 / NBRC 100938</strain>
    </source>
</reference>
<name>COBQ_METKA</name>
<dbReference type="EMBL" id="AE009439">
    <property type="protein sequence ID" value="AAM02627.1"/>
    <property type="molecule type" value="Genomic_DNA"/>
</dbReference>
<dbReference type="RefSeq" id="WP_011019782.1">
    <property type="nucleotide sequence ID" value="NC_003551.1"/>
</dbReference>
<dbReference type="SMR" id="Q8TVH5"/>
<dbReference type="FunCoup" id="Q8TVH5">
    <property type="interactions" value="84"/>
</dbReference>
<dbReference type="STRING" id="190192.MK1414"/>
<dbReference type="PaxDb" id="190192-MK1414"/>
<dbReference type="EnsemblBacteria" id="AAM02627">
    <property type="protein sequence ID" value="AAM02627"/>
    <property type="gene ID" value="MK1414"/>
</dbReference>
<dbReference type="GeneID" id="1478009"/>
<dbReference type="KEGG" id="mka:MK1414"/>
<dbReference type="PATRIC" id="fig|190192.8.peg.1570"/>
<dbReference type="HOGENOM" id="CLU_019250_2_2_2"/>
<dbReference type="InParanoid" id="Q8TVH5"/>
<dbReference type="OrthoDB" id="53136at2157"/>
<dbReference type="UniPathway" id="UPA00148"/>
<dbReference type="Proteomes" id="UP000001826">
    <property type="component" value="Chromosome"/>
</dbReference>
<dbReference type="GO" id="GO:0015420">
    <property type="term" value="F:ABC-type vitamin B12 transporter activity"/>
    <property type="evidence" value="ECO:0007669"/>
    <property type="project" value="UniProtKB-UniRule"/>
</dbReference>
<dbReference type="GO" id="GO:0003824">
    <property type="term" value="F:catalytic activity"/>
    <property type="evidence" value="ECO:0007669"/>
    <property type="project" value="InterPro"/>
</dbReference>
<dbReference type="GO" id="GO:0009236">
    <property type="term" value="P:cobalamin biosynthetic process"/>
    <property type="evidence" value="ECO:0007669"/>
    <property type="project" value="UniProtKB-UniRule"/>
</dbReference>
<dbReference type="CDD" id="cd05389">
    <property type="entry name" value="CobQ_N"/>
    <property type="match status" value="1"/>
</dbReference>
<dbReference type="CDD" id="cd01750">
    <property type="entry name" value="GATase1_CobQ"/>
    <property type="match status" value="1"/>
</dbReference>
<dbReference type="Gene3D" id="3.40.50.880">
    <property type="match status" value="1"/>
</dbReference>
<dbReference type="Gene3D" id="3.40.50.300">
    <property type="entry name" value="P-loop containing nucleotide triphosphate hydrolases"/>
    <property type="match status" value="1"/>
</dbReference>
<dbReference type="HAMAP" id="MF_00028">
    <property type="entry name" value="CobQ"/>
    <property type="match status" value="1"/>
</dbReference>
<dbReference type="InterPro" id="IPR029062">
    <property type="entry name" value="Class_I_gatase-like"/>
</dbReference>
<dbReference type="InterPro" id="IPR002586">
    <property type="entry name" value="CobQ/CobB/MinD/ParA_Nub-bd_dom"/>
</dbReference>
<dbReference type="InterPro" id="IPR033949">
    <property type="entry name" value="CobQ_GATase1"/>
</dbReference>
<dbReference type="InterPro" id="IPR047045">
    <property type="entry name" value="CobQ_N"/>
</dbReference>
<dbReference type="InterPro" id="IPR004459">
    <property type="entry name" value="CobQ_synth"/>
</dbReference>
<dbReference type="InterPro" id="IPR011698">
    <property type="entry name" value="GATase_3"/>
</dbReference>
<dbReference type="InterPro" id="IPR027417">
    <property type="entry name" value="P-loop_NTPase"/>
</dbReference>
<dbReference type="NCBIfam" id="TIGR00313">
    <property type="entry name" value="cobQ"/>
    <property type="match status" value="1"/>
</dbReference>
<dbReference type="NCBIfam" id="NF001989">
    <property type="entry name" value="PRK00784.1"/>
    <property type="match status" value="1"/>
</dbReference>
<dbReference type="PANTHER" id="PTHR21343:SF1">
    <property type="entry name" value="COBYRIC ACID SYNTHASE"/>
    <property type="match status" value="1"/>
</dbReference>
<dbReference type="PANTHER" id="PTHR21343">
    <property type="entry name" value="DETHIOBIOTIN SYNTHETASE"/>
    <property type="match status" value="1"/>
</dbReference>
<dbReference type="Pfam" id="PF01656">
    <property type="entry name" value="CbiA"/>
    <property type="match status" value="1"/>
</dbReference>
<dbReference type="Pfam" id="PF07685">
    <property type="entry name" value="GATase_3"/>
    <property type="match status" value="1"/>
</dbReference>
<dbReference type="SUPFAM" id="SSF52317">
    <property type="entry name" value="Class I glutamine amidotransferase-like"/>
    <property type="match status" value="1"/>
</dbReference>
<dbReference type="SUPFAM" id="SSF52540">
    <property type="entry name" value="P-loop containing nucleoside triphosphate hydrolases"/>
    <property type="match status" value="1"/>
</dbReference>
<dbReference type="PROSITE" id="PS51274">
    <property type="entry name" value="GATASE_COBBQ"/>
    <property type="match status" value="1"/>
</dbReference>
<gene>
    <name evidence="1" type="primary">cobQ</name>
    <name type="ordered locus">MK1414</name>
</gene>
<evidence type="ECO:0000255" key="1">
    <source>
        <dbReference type="HAMAP-Rule" id="MF_00028"/>
    </source>
</evidence>
<proteinExistence type="inferred from homology"/>
<sequence length="494" mass="54561">MSAIMFVGTASNSGKSFLAAVTCAYLRQRGVDVAPFKSQNMSLNSCVAKENGEIAVAQAFQAAMAGQEPSIHHNPVLLKPKGELRSEVIVHGKPIGTMSYREYREIVFEDPWQAVLESAEILSEEHEVIVAEGAGSPAEINVLDTDIANLRVAEALGADVILVADISRGGAFAAVYGTIELLPERWRRLIKGFLFNKFLGDESLLEPGIKELERRLGVRYLGTVRHVGDFWMPWEDSEALDTHSPGRGSVRIAVIRLPRISNFTDFEPLAMEPDVRVEFVDPRDNLPEDADAVILPGTRTTISDLEELRKRGMDEEVVQAADEGTVVLGVCGGYQMLGRELVDESGGELDPGESVPGLGLLDAVTVFPSDAGKVTVRSEGVVNHPHLRGIRVEGFEIHEGRTYTDEPHLVRLRSGYGNRGCFLDGAYRTDRPVLGTYLHGIFFNRRFRHEFLRWVSGGRWKPPERDVVREAVKRNLQVALEIVESTDLPELLGE</sequence>
<keyword id="KW-0169">Cobalamin biosynthesis</keyword>
<keyword id="KW-0315">Glutamine amidotransferase</keyword>
<keyword id="KW-1185">Reference proteome</keyword>
<comment type="function">
    <text evidence="1">Catalyzes amidations at positions B, D, E, and G on adenosylcobyrinic A,C-diamide. NH(2) groups are provided by glutamine, and one molecule of ATP is hydrogenolyzed for each amidation.</text>
</comment>
<comment type="pathway">
    <text evidence="1">Cofactor biosynthesis; adenosylcobalamin biosynthesis.</text>
</comment>
<comment type="similarity">
    <text evidence="1">Belongs to the CobB/CobQ family. CobQ subfamily.</text>
</comment>
<organism>
    <name type="scientific">Methanopyrus kandleri (strain AV19 / DSM 6324 / JCM 9639 / NBRC 100938)</name>
    <dbReference type="NCBI Taxonomy" id="190192"/>
    <lineage>
        <taxon>Archaea</taxon>
        <taxon>Methanobacteriati</taxon>
        <taxon>Methanobacteriota</taxon>
        <taxon>Methanomada group</taxon>
        <taxon>Methanopyri</taxon>
        <taxon>Methanopyrales</taxon>
        <taxon>Methanopyraceae</taxon>
        <taxon>Methanopyrus</taxon>
    </lineage>
</organism>
<accession>Q8TVH5</accession>